<evidence type="ECO:0000250" key="1"/>
<evidence type="ECO:0000250" key="2">
    <source>
        <dbReference type="UniProtKB" id="Q13610"/>
    </source>
</evidence>
<evidence type="ECO:0000250" key="3">
    <source>
        <dbReference type="UniProtKB" id="Q99LL5"/>
    </source>
</evidence>
<evidence type="ECO:0000256" key="4">
    <source>
        <dbReference type="SAM" id="MobiDB-lite"/>
    </source>
</evidence>
<evidence type="ECO:0000305" key="5"/>
<organism>
    <name type="scientific">Bos taurus</name>
    <name type="common">Bovine</name>
    <dbReference type="NCBI Taxonomy" id="9913"/>
    <lineage>
        <taxon>Eukaryota</taxon>
        <taxon>Metazoa</taxon>
        <taxon>Chordata</taxon>
        <taxon>Craniata</taxon>
        <taxon>Vertebrata</taxon>
        <taxon>Euteleostomi</taxon>
        <taxon>Mammalia</taxon>
        <taxon>Eutheria</taxon>
        <taxon>Laurasiatheria</taxon>
        <taxon>Artiodactyla</taxon>
        <taxon>Ruminantia</taxon>
        <taxon>Pecora</taxon>
        <taxon>Bovidae</taxon>
        <taxon>Bovinae</taxon>
        <taxon>Bos</taxon>
    </lineage>
</organism>
<gene>
    <name type="primary">PWP1</name>
</gene>
<feature type="chain" id="PRO_0000244987" description="Periodic tryptophan protein 1 homolog">
    <location>
        <begin position="1"/>
        <end position="500"/>
    </location>
</feature>
<feature type="repeat" description="WD 1">
    <location>
        <begin position="185"/>
        <end position="229"/>
    </location>
</feature>
<feature type="repeat" description="WD 2">
    <location>
        <begin position="253"/>
        <end position="293"/>
    </location>
</feature>
<feature type="repeat" description="WD 3">
    <location>
        <begin position="296"/>
        <end position="336"/>
    </location>
</feature>
<feature type="repeat" description="WD 4">
    <location>
        <begin position="382"/>
        <end position="422"/>
    </location>
</feature>
<feature type="repeat" description="WD 5">
    <location>
        <begin position="427"/>
        <end position="467"/>
    </location>
</feature>
<feature type="region of interest" description="Disordered" evidence="4">
    <location>
        <begin position="38"/>
        <end position="88"/>
    </location>
</feature>
<feature type="compositionally biased region" description="Acidic residues" evidence="4">
    <location>
        <begin position="76"/>
        <end position="88"/>
    </location>
</feature>
<feature type="modified residue" description="Phosphothreonine" evidence="2">
    <location>
        <position position="21"/>
    </location>
</feature>
<feature type="modified residue" description="Phosphoserine" evidence="2">
    <location>
        <position position="49"/>
    </location>
</feature>
<feature type="modified residue" description="Phosphothreonine" evidence="2">
    <location>
        <position position="54"/>
    </location>
</feature>
<feature type="modified residue" description="Phosphoserine" evidence="2">
    <location>
        <position position="58"/>
    </location>
</feature>
<feature type="modified residue" description="Phosphothreonine" evidence="2">
    <location>
        <position position="85"/>
    </location>
</feature>
<feature type="modified residue" description="Phosphoserine" evidence="2">
    <location>
        <position position="484"/>
    </location>
</feature>
<feature type="modified residue" description="Phosphoserine" evidence="3">
    <location>
        <position position="493"/>
    </location>
</feature>
<comment type="function">
    <text evidence="2">Chromatin-associated factor that regulates transcription (By similarity). Regulates Pol I-mediated rRNA biogenesis and, probably, Pol III-mediated transcription (By similarity). Regulates the epigenetic status of rDNA (By similarity).</text>
</comment>
<comment type="subunit">
    <text evidence="2">Associates with the RNA polymerase (Pol I) complex. Interacts with POLR1E.</text>
</comment>
<comment type="subcellular location">
    <subcellularLocation>
        <location evidence="2">Nucleus</location>
    </subcellularLocation>
    <subcellularLocation>
        <location evidence="2">Nucleus</location>
        <location evidence="2">Nucleolus</location>
    </subcellularLocation>
    <subcellularLocation>
        <location evidence="2">Chromosome</location>
    </subcellularLocation>
    <text evidence="2">Associates with chromatin regions of rDNA.</text>
</comment>
<comment type="PTM">
    <text evidence="1">Phosphorylated.</text>
</comment>
<comment type="similarity">
    <text evidence="5">Belongs to the WD repeat PWP1 family.</text>
</comment>
<accession>Q2HJ56</accession>
<keyword id="KW-0158">Chromosome</keyword>
<keyword id="KW-0539">Nucleus</keyword>
<keyword id="KW-0597">Phosphoprotein</keyword>
<keyword id="KW-1185">Reference proteome</keyword>
<keyword id="KW-0677">Repeat</keyword>
<keyword id="KW-0690">Ribosome biogenesis</keyword>
<keyword id="KW-0804">Transcription</keyword>
<keyword id="KW-0805">Transcription regulation</keyword>
<keyword id="KW-0853">WD repeat</keyword>
<sequence>MNRSRQVTCVAWVRCGVAKETPDKVELSKEEVKRLIAEAKEKLQEEGGSDEQETGNPSEDGMQSARTQARPREPLEDGDPEDDRTLDDDELAEYDLDKYDEEGDPDAETLGESLLGLTVYGSNDQDPYVTLKDTEQYEREDFLIKPSDNLIVCGRAEQDQCNLEVHVYNQEEDSFYVHHDILLSAYPLSVEWLNFDPSPDDSTGNYIAVGNMTPVIEVWDLDIVDSLEPVFTLGSKLSKKKKKKGKKNSSADGHTDAVLDLSWNKLVRNVLASASADNTVILWDMSLGKPAASLAVHTDKVQTLQFHPFEAQTLISGSYDKSVALYDCRSPEESHRMWRFSGQIERVTWNHFSPCHFLASTDDGFVYNLDARSDKPIFTLNAHNDEISGLDLSSQIKGCLVTASADKYVKIWDILGDRPSLVHSRDMKMGVLFCSSCCPDLPFIYAFGGQKEGLRVWDISTVSSVNEAFGRRERLVLGNARTSSISGPFGNRSSETPMES</sequence>
<dbReference type="EMBL" id="BC113302">
    <property type="protein sequence ID" value="AAI13303.1"/>
    <property type="molecule type" value="mRNA"/>
</dbReference>
<dbReference type="RefSeq" id="NP_001039631.1">
    <property type="nucleotide sequence ID" value="NM_001046166.1"/>
</dbReference>
<dbReference type="SMR" id="Q2HJ56"/>
<dbReference type="FunCoup" id="Q2HJ56">
    <property type="interactions" value="4924"/>
</dbReference>
<dbReference type="STRING" id="9913.ENSBTAP00000006109"/>
<dbReference type="PaxDb" id="9913-ENSBTAP00000006109"/>
<dbReference type="Ensembl" id="ENSBTAT00000006109.6">
    <property type="protein sequence ID" value="ENSBTAP00000006109.5"/>
    <property type="gene ID" value="ENSBTAG00000004654.7"/>
</dbReference>
<dbReference type="GeneID" id="514147"/>
<dbReference type="KEGG" id="bta:514147"/>
<dbReference type="CTD" id="11137"/>
<dbReference type="VEuPathDB" id="HostDB:ENSBTAG00000004654"/>
<dbReference type="VGNC" id="VGNC:33580">
    <property type="gene designation" value="PWP1"/>
</dbReference>
<dbReference type="eggNOG" id="KOG0270">
    <property type="taxonomic scope" value="Eukaryota"/>
</dbReference>
<dbReference type="GeneTree" id="ENSGT00390000017324"/>
<dbReference type="HOGENOM" id="CLU_023867_1_1_1"/>
<dbReference type="InParanoid" id="Q2HJ56"/>
<dbReference type="OMA" id="CFVPRGV"/>
<dbReference type="OrthoDB" id="270624at2759"/>
<dbReference type="TreeFam" id="TF314868"/>
<dbReference type="CD-CODE" id="D7FE2080">
    <property type="entry name" value="Nucleolus"/>
</dbReference>
<dbReference type="Proteomes" id="UP000009136">
    <property type="component" value="Chromosome 5"/>
</dbReference>
<dbReference type="Bgee" id="ENSBTAG00000004654">
    <property type="expression patterns" value="Expressed in oocyte and 105 other cell types or tissues"/>
</dbReference>
<dbReference type="GO" id="GO:0005694">
    <property type="term" value="C:chromosome"/>
    <property type="evidence" value="ECO:0007669"/>
    <property type="project" value="UniProtKB-SubCell"/>
</dbReference>
<dbReference type="GO" id="GO:0005794">
    <property type="term" value="C:Golgi apparatus"/>
    <property type="evidence" value="ECO:0007669"/>
    <property type="project" value="Ensembl"/>
</dbReference>
<dbReference type="GO" id="GO:0005730">
    <property type="term" value="C:nucleolus"/>
    <property type="evidence" value="ECO:0007669"/>
    <property type="project" value="UniProtKB-SubCell"/>
</dbReference>
<dbReference type="GO" id="GO:0005634">
    <property type="term" value="C:nucleus"/>
    <property type="evidence" value="ECO:0000318"/>
    <property type="project" value="GO_Central"/>
</dbReference>
<dbReference type="GO" id="GO:0140713">
    <property type="term" value="F:histone chaperone activity"/>
    <property type="evidence" value="ECO:0007669"/>
    <property type="project" value="Ensembl"/>
</dbReference>
<dbReference type="GO" id="GO:1990889">
    <property type="term" value="F:histone H4K20me3 reader activity"/>
    <property type="evidence" value="ECO:0007669"/>
    <property type="project" value="Ensembl"/>
</dbReference>
<dbReference type="GO" id="GO:0045892">
    <property type="term" value="P:negative regulation of DNA-templated transcription"/>
    <property type="evidence" value="ECO:0007669"/>
    <property type="project" value="Ensembl"/>
</dbReference>
<dbReference type="GO" id="GO:2000738">
    <property type="term" value="P:positive regulation of stem cell differentiation"/>
    <property type="evidence" value="ECO:0007669"/>
    <property type="project" value="Ensembl"/>
</dbReference>
<dbReference type="GO" id="GO:1901838">
    <property type="term" value="P:positive regulation of transcription of nucleolar large rRNA by RNA polymerase I"/>
    <property type="evidence" value="ECO:0007669"/>
    <property type="project" value="Ensembl"/>
</dbReference>
<dbReference type="GO" id="GO:0006364">
    <property type="term" value="P:rRNA processing"/>
    <property type="evidence" value="ECO:0007669"/>
    <property type="project" value="InterPro"/>
</dbReference>
<dbReference type="FunFam" id="2.130.10.10:FF:000241">
    <property type="entry name" value="periodic tryptophan protein 1 homolog"/>
    <property type="match status" value="1"/>
</dbReference>
<dbReference type="Gene3D" id="2.130.10.10">
    <property type="entry name" value="YVTN repeat-like/Quinoprotein amine dehydrogenase"/>
    <property type="match status" value="1"/>
</dbReference>
<dbReference type="InterPro" id="IPR020472">
    <property type="entry name" value="G-protein_beta_WD-40_rep"/>
</dbReference>
<dbReference type="InterPro" id="IPR044285">
    <property type="entry name" value="PWP1"/>
</dbReference>
<dbReference type="InterPro" id="IPR015943">
    <property type="entry name" value="WD40/YVTN_repeat-like_dom_sf"/>
</dbReference>
<dbReference type="InterPro" id="IPR019775">
    <property type="entry name" value="WD40_repeat_CS"/>
</dbReference>
<dbReference type="InterPro" id="IPR036322">
    <property type="entry name" value="WD40_repeat_dom_sf"/>
</dbReference>
<dbReference type="InterPro" id="IPR001680">
    <property type="entry name" value="WD40_rpt"/>
</dbReference>
<dbReference type="PANTHER" id="PTHR14091">
    <property type="entry name" value="PERIODIC TRYPTOPHAN PROTEIN 1"/>
    <property type="match status" value="1"/>
</dbReference>
<dbReference type="PANTHER" id="PTHR14091:SF0">
    <property type="entry name" value="PERIODIC TRYPTOPHAN PROTEIN 1 HOMOLOG"/>
    <property type="match status" value="1"/>
</dbReference>
<dbReference type="Pfam" id="PF00400">
    <property type="entry name" value="WD40"/>
    <property type="match status" value="3"/>
</dbReference>
<dbReference type="PRINTS" id="PR00320">
    <property type="entry name" value="GPROTEINBRPT"/>
</dbReference>
<dbReference type="SMART" id="SM00320">
    <property type="entry name" value="WD40"/>
    <property type="match status" value="4"/>
</dbReference>
<dbReference type="SUPFAM" id="SSF50978">
    <property type="entry name" value="WD40 repeat-like"/>
    <property type="match status" value="1"/>
</dbReference>
<dbReference type="PROSITE" id="PS00678">
    <property type="entry name" value="WD_REPEATS_1"/>
    <property type="match status" value="2"/>
</dbReference>
<dbReference type="PROSITE" id="PS50082">
    <property type="entry name" value="WD_REPEATS_2"/>
    <property type="match status" value="3"/>
</dbReference>
<dbReference type="PROSITE" id="PS50294">
    <property type="entry name" value="WD_REPEATS_REGION"/>
    <property type="match status" value="1"/>
</dbReference>
<proteinExistence type="evidence at transcript level"/>
<name>PWP1_BOVIN</name>
<protein>
    <recommendedName>
        <fullName>Periodic tryptophan protein 1 homolog</fullName>
    </recommendedName>
</protein>
<reference key="1">
    <citation type="submission" date="2006-02" db="EMBL/GenBank/DDBJ databases">
        <authorList>
            <consortium name="NIH - Mammalian Gene Collection (MGC) project"/>
        </authorList>
    </citation>
    <scope>NUCLEOTIDE SEQUENCE [LARGE SCALE MRNA]</scope>
    <source>
        <strain>Hereford</strain>
        <tissue>Uterus</tissue>
    </source>
</reference>